<evidence type="ECO:0000269" key="1">
    <source>
    </source>
</evidence>
<evidence type="ECO:0000303" key="2">
    <source>
    </source>
</evidence>
<evidence type="ECO:0000305" key="3"/>
<evidence type="ECO:0000305" key="4">
    <source>
    </source>
</evidence>
<proteinExistence type="evidence at protein level"/>
<protein>
    <recommendedName>
        <fullName evidence="2">Probable portal protein</fullName>
    </recommendedName>
    <alternativeName>
        <fullName evidence="3">Gene product 4</fullName>
        <shortName evidence="3">gp4</shortName>
    </alternativeName>
</protein>
<name>PORTL_BPLP2</name>
<sequence length="378" mass="43276">MNLFGKVVSFSRGKLNNDTQRVTAWQNEAVEYTSAFVTNIHNKIANEITKVEFNHVKYKKSDVGSDTLISMAGSDLDEVLNWSPKGERNSMDFWRKVIKKLLRAPYVDLYAVFDDNTGELLDLLFADDKKEYKPEELVRLTSPFYINEDTSILDNALASIQTKLEQGKLRGLLKINAFLDIDNTQEYREKALTTIKNMQEGSSYNGLTPVDNKTEIVELKKDYSVLNKDEIDLIKSELLTGYFMNENILLGTASQEQQIYFYNSTIIPLLIQLEKELTYKLISTNRRRVVKGNLYYERIIVDNQLFKFATLKELIDLYHENINGPIFTQNQLLVKMGEQPIEGGDVYIANLNAVAVKNLSDLQGSRKDVTSTDETNNQ</sequence>
<feature type="chain" id="PRO_0000438222" description="Probable portal protein">
    <location>
        <begin position="1"/>
        <end position="378"/>
    </location>
</feature>
<accession>D3WAC3</accession>
<dbReference type="EMBL" id="GQ979703">
    <property type="protein sequence ID" value="ADC80080.1"/>
    <property type="molecule type" value="Genomic_DNA"/>
</dbReference>
<dbReference type="RefSeq" id="YP_009613484.1">
    <property type="nucleotide sequence ID" value="NC_042024.1"/>
</dbReference>
<dbReference type="GeneID" id="40089859"/>
<dbReference type="Proteomes" id="UP000002348">
    <property type="component" value="Segment"/>
</dbReference>
<dbReference type="GO" id="GO:0046798">
    <property type="term" value="C:viral portal complex"/>
    <property type="evidence" value="ECO:0000314"/>
    <property type="project" value="UniProtKB"/>
</dbReference>
<dbReference type="GO" id="GO:0099001">
    <property type="term" value="P:symbiont genome ejection through host cell envelope, long flexible tail mechanism"/>
    <property type="evidence" value="ECO:0007669"/>
    <property type="project" value="UniProtKB-KW"/>
</dbReference>
<organism>
    <name type="scientific">Lactococcus phage p2</name>
    <name type="common">Lactococcus lactis bacteriophage p2</name>
    <dbReference type="NCBI Taxonomy" id="254252"/>
    <lineage>
        <taxon>Viruses</taxon>
        <taxon>Duplodnaviria</taxon>
        <taxon>Heunggongvirae</taxon>
        <taxon>Uroviricota</taxon>
        <taxon>Caudoviricetes</taxon>
        <taxon>Skunavirus</taxon>
    </lineage>
</organism>
<reference key="1">
    <citation type="submission" date="2010-02" db="EMBL/GenBank/DDBJ databases">
        <title>Complete genomic sequence of Lactococcus lactis phage p2.</title>
        <authorList>
            <person name="Tremblay D.M."/>
            <person name="Deveau H."/>
            <person name="Moineau S."/>
        </authorList>
    </citation>
    <scope>NUCLEOTIDE SEQUENCE [LARGE SCALE GENOMIC DNA]</scope>
</reference>
<reference key="2">
    <citation type="journal article" date="2013" name="J. Virol.">
        <title>Structure, adsorption to host, and infection mechanism of virulent lactococcal phage p2.</title>
        <authorList>
            <person name="Bebeacua C."/>
            <person name="Tremblay D."/>
            <person name="Farenc C."/>
            <person name="Chapot-Chartier M.P."/>
            <person name="Sadovskaya I."/>
            <person name="van Heel M."/>
            <person name="Veesler D."/>
            <person name="Moineau S."/>
            <person name="Cambillau C."/>
        </authorList>
    </citation>
    <scope>STRUCTURE BY ELECTRON MICROSCOPY (13 ANGSTROMS) OF THE CAPSID</scope>
    <scope>FUNCTION</scope>
    <scope>SUBUNIT</scope>
    <scope>SUBCELLULAR LOCATION</scope>
</reference>
<keyword id="KW-0167">Capsid protein</keyword>
<keyword id="KW-0118">Viral capsid assembly</keyword>
<keyword id="KW-1171">Viral genome ejection through host cell envelope</keyword>
<keyword id="KW-0231">Viral genome packaging</keyword>
<keyword id="KW-1243">Viral long flexible tail ejection system</keyword>
<keyword id="KW-1162">Viral penetration into host cytoplasm</keyword>
<keyword id="KW-1188">Viral release from host cell</keyword>
<keyword id="KW-0946">Virion</keyword>
<keyword id="KW-1160">Virus entry into host cell</keyword>
<comment type="function">
    <text evidence="4">Forms the portal vertex of the capsid. This portal plays critical roles in head assembly, genome packaging, neck/tail attachment, and genome ejection. The portal protein multimerizes as a single ring-shaped homododecamer arranged around a central channel. Binds to the terminase subunits to form the packaging machine. Necessary to ensure correct procapsid size during capsid assembly. Once the capsid is packaged with the DNA, the terminase complex is substituted by the connector proteins gp15.</text>
</comment>
<comment type="subunit">
    <text evidence="4">Homododecamer.</text>
</comment>
<comment type="subcellular location">
    <subcellularLocation>
        <location evidence="1">Virion</location>
    </subcellularLocation>
    <text evidence="4">Occupies the twelfth vertex of the capsid.</text>
</comment>
<comment type="similarity">
    <text evidence="3">Belongs to the skunalikevirus portal protein family.</text>
</comment>
<organismHost>
    <name type="scientific">Lactococcus lactis</name>
    <dbReference type="NCBI Taxonomy" id="1358"/>
</organismHost>